<sequence length="326" mass="36137">MSQLTDGFGRSFPYLRLSLTEACNFRCSYCLPDGYQVDGRPRFLQVDEIARLVRAFAALGMSKIRLTGGEPSLRKDLDEIIATVAAAPGIRKVAITTNGTLLPRRLPGWHRAGLTALNVSMDSLQRERFRTITGHDRLPEIEQGLALAQALGLPAIKLNAVLLRGLNDDELPQWMDYLRDRPFSVRFIELMRTGDNEAYFQRHHLRADVVIEQLLAAGWHERPRAADAGPAREFGHPDHRGSIGIIAPYSRDFCKGCNRLRVTAKGDLRLCLFGEFGVPLRPLLQRDDDHDALLARITTQLGLKAAGHGLHQGQTGLTPHLASIGG</sequence>
<dbReference type="EC" id="4.1.99.22" evidence="1"/>
<dbReference type="EMBL" id="CP001111">
    <property type="protein sequence ID" value="ACF51948.1"/>
    <property type="molecule type" value="Genomic_DNA"/>
</dbReference>
<dbReference type="RefSeq" id="WP_012511281.1">
    <property type="nucleotide sequence ID" value="NC_011071.1"/>
</dbReference>
<dbReference type="SMR" id="B4SL67"/>
<dbReference type="STRING" id="391008.Smal_2244"/>
<dbReference type="KEGG" id="smt:Smal_2244"/>
<dbReference type="eggNOG" id="COG2896">
    <property type="taxonomic scope" value="Bacteria"/>
</dbReference>
<dbReference type="HOGENOM" id="CLU_009273_0_1_6"/>
<dbReference type="OrthoDB" id="9763993at2"/>
<dbReference type="UniPathway" id="UPA00344"/>
<dbReference type="Proteomes" id="UP000001867">
    <property type="component" value="Chromosome"/>
</dbReference>
<dbReference type="GO" id="GO:0051539">
    <property type="term" value="F:4 iron, 4 sulfur cluster binding"/>
    <property type="evidence" value="ECO:0007669"/>
    <property type="project" value="UniProtKB-UniRule"/>
</dbReference>
<dbReference type="GO" id="GO:0061799">
    <property type="term" value="F:cyclic pyranopterin monophosphate synthase activity"/>
    <property type="evidence" value="ECO:0007669"/>
    <property type="project" value="TreeGrafter"/>
</dbReference>
<dbReference type="GO" id="GO:0061798">
    <property type="term" value="F:GTP 3',8'-cyclase activity"/>
    <property type="evidence" value="ECO:0007669"/>
    <property type="project" value="UniProtKB-UniRule"/>
</dbReference>
<dbReference type="GO" id="GO:0005525">
    <property type="term" value="F:GTP binding"/>
    <property type="evidence" value="ECO:0007669"/>
    <property type="project" value="UniProtKB-UniRule"/>
</dbReference>
<dbReference type="GO" id="GO:0046872">
    <property type="term" value="F:metal ion binding"/>
    <property type="evidence" value="ECO:0007669"/>
    <property type="project" value="UniProtKB-KW"/>
</dbReference>
<dbReference type="GO" id="GO:1904047">
    <property type="term" value="F:S-adenosyl-L-methionine binding"/>
    <property type="evidence" value="ECO:0007669"/>
    <property type="project" value="UniProtKB-UniRule"/>
</dbReference>
<dbReference type="GO" id="GO:0006777">
    <property type="term" value="P:Mo-molybdopterin cofactor biosynthetic process"/>
    <property type="evidence" value="ECO:0007669"/>
    <property type="project" value="UniProtKB-UniRule"/>
</dbReference>
<dbReference type="CDD" id="cd01335">
    <property type="entry name" value="Radical_SAM"/>
    <property type="match status" value="1"/>
</dbReference>
<dbReference type="CDD" id="cd21117">
    <property type="entry name" value="Twitch_MoaA"/>
    <property type="match status" value="1"/>
</dbReference>
<dbReference type="Gene3D" id="3.20.20.70">
    <property type="entry name" value="Aldolase class I"/>
    <property type="match status" value="1"/>
</dbReference>
<dbReference type="HAMAP" id="MF_01225_B">
    <property type="entry name" value="MoaA_B"/>
    <property type="match status" value="1"/>
</dbReference>
<dbReference type="InterPro" id="IPR013785">
    <property type="entry name" value="Aldolase_TIM"/>
</dbReference>
<dbReference type="InterPro" id="IPR006638">
    <property type="entry name" value="Elp3/MiaA/NifB-like_rSAM"/>
</dbReference>
<dbReference type="InterPro" id="IPR013483">
    <property type="entry name" value="MoaA"/>
</dbReference>
<dbReference type="InterPro" id="IPR000385">
    <property type="entry name" value="MoaA_NifB_PqqE_Fe-S-bd_CS"/>
</dbReference>
<dbReference type="InterPro" id="IPR010505">
    <property type="entry name" value="MoaA_twitch"/>
</dbReference>
<dbReference type="InterPro" id="IPR050105">
    <property type="entry name" value="MoCo_biosynth_MoaA/MoaC"/>
</dbReference>
<dbReference type="InterPro" id="IPR007197">
    <property type="entry name" value="rSAM"/>
</dbReference>
<dbReference type="NCBIfam" id="TIGR02666">
    <property type="entry name" value="moaA"/>
    <property type="match status" value="1"/>
</dbReference>
<dbReference type="PANTHER" id="PTHR22960:SF28">
    <property type="entry name" value="GTP 3',8-CYCLASE"/>
    <property type="match status" value="1"/>
</dbReference>
<dbReference type="PANTHER" id="PTHR22960">
    <property type="entry name" value="MOLYBDOPTERIN COFACTOR SYNTHESIS PROTEIN A"/>
    <property type="match status" value="1"/>
</dbReference>
<dbReference type="Pfam" id="PF06463">
    <property type="entry name" value="Mob_synth_C"/>
    <property type="match status" value="1"/>
</dbReference>
<dbReference type="Pfam" id="PF04055">
    <property type="entry name" value="Radical_SAM"/>
    <property type="match status" value="1"/>
</dbReference>
<dbReference type="SFLD" id="SFLDG01383">
    <property type="entry name" value="cyclic_pyranopterin_phosphate"/>
    <property type="match status" value="1"/>
</dbReference>
<dbReference type="SFLD" id="SFLDG01386">
    <property type="entry name" value="main_SPASM_domain-containing"/>
    <property type="match status" value="1"/>
</dbReference>
<dbReference type="SMART" id="SM00729">
    <property type="entry name" value="Elp3"/>
    <property type="match status" value="1"/>
</dbReference>
<dbReference type="SUPFAM" id="SSF102114">
    <property type="entry name" value="Radical SAM enzymes"/>
    <property type="match status" value="1"/>
</dbReference>
<dbReference type="PROSITE" id="PS01305">
    <property type="entry name" value="MOAA_NIFB_PQQE"/>
    <property type="match status" value="1"/>
</dbReference>
<dbReference type="PROSITE" id="PS51918">
    <property type="entry name" value="RADICAL_SAM"/>
    <property type="match status" value="1"/>
</dbReference>
<proteinExistence type="inferred from homology"/>
<reference key="1">
    <citation type="submission" date="2008-06" db="EMBL/GenBank/DDBJ databases">
        <title>Complete sequence of Stenotrophomonas maltophilia R551-3.</title>
        <authorList>
            <consortium name="US DOE Joint Genome Institute"/>
            <person name="Lucas S."/>
            <person name="Copeland A."/>
            <person name="Lapidus A."/>
            <person name="Glavina del Rio T."/>
            <person name="Dalin E."/>
            <person name="Tice H."/>
            <person name="Pitluck S."/>
            <person name="Chain P."/>
            <person name="Malfatti S."/>
            <person name="Shin M."/>
            <person name="Vergez L."/>
            <person name="Lang D."/>
            <person name="Schmutz J."/>
            <person name="Larimer F."/>
            <person name="Land M."/>
            <person name="Hauser L."/>
            <person name="Kyrpides N."/>
            <person name="Mikhailova N."/>
            <person name="Taghavi S."/>
            <person name="Monchy S."/>
            <person name="Newman L."/>
            <person name="Vangronsveld J."/>
            <person name="van der Lelie D."/>
            <person name="Richardson P."/>
        </authorList>
    </citation>
    <scope>NUCLEOTIDE SEQUENCE [LARGE SCALE GENOMIC DNA]</scope>
    <source>
        <strain>R551-3</strain>
    </source>
</reference>
<gene>
    <name evidence="1" type="primary">moaA</name>
    <name type="ordered locus">Smal_2244</name>
</gene>
<feature type="chain" id="PRO_1000139348" description="GTP 3',8-cyclase">
    <location>
        <begin position="1"/>
        <end position="326"/>
    </location>
</feature>
<feature type="domain" description="Radical SAM core" evidence="2">
    <location>
        <begin position="7"/>
        <end position="232"/>
    </location>
</feature>
<feature type="binding site" evidence="1">
    <location>
        <position position="16"/>
    </location>
    <ligand>
        <name>GTP</name>
        <dbReference type="ChEBI" id="CHEBI:37565"/>
    </ligand>
</feature>
<feature type="binding site" evidence="1">
    <location>
        <position position="23"/>
    </location>
    <ligand>
        <name>[4Fe-4S] cluster</name>
        <dbReference type="ChEBI" id="CHEBI:49883"/>
        <label>1</label>
        <note>4Fe-4S-S-AdoMet</note>
    </ligand>
</feature>
<feature type="binding site" evidence="1">
    <location>
        <position position="27"/>
    </location>
    <ligand>
        <name>[4Fe-4S] cluster</name>
        <dbReference type="ChEBI" id="CHEBI:49883"/>
        <label>1</label>
        <note>4Fe-4S-S-AdoMet</note>
    </ligand>
</feature>
<feature type="binding site" evidence="1">
    <location>
        <position position="29"/>
    </location>
    <ligand>
        <name>S-adenosyl-L-methionine</name>
        <dbReference type="ChEBI" id="CHEBI:59789"/>
    </ligand>
</feature>
<feature type="binding site" evidence="1">
    <location>
        <position position="30"/>
    </location>
    <ligand>
        <name>[4Fe-4S] cluster</name>
        <dbReference type="ChEBI" id="CHEBI:49883"/>
        <label>1</label>
        <note>4Fe-4S-S-AdoMet</note>
    </ligand>
</feature>
<feature type="binding site" evidence="1">
    <location>
        <position position="65"/>
    </location>
    <ligand>
        <name>GTP</name>
        <dbReference type="ChEBI" id="CHEBI:37565"/>
    </ligand>
</feature>
<feature type="binding site" evidence="1">
    <location>
        <position position="69"/>
    </location>
    <ligand>
        <name>S-adenosyl-L-methionine</name>
        <dbReference type="ChEBI" id="CHEBI:59789"/>
    </ligand>
</feature>
<feature type="binding site" evidence="1">
    <location>
        <position position="96"/>
    </location>
    <ligand>
        <name>GTP</name>
        <dbReference type="ChEBI" id="CHEBI:37565"/>
    </ligand>
</feature>
<feature type="binding site" evidence="1">
    <location>
        <position position="120"/>
    </location>
    <ligand>
        <name>S-adenosyl-L-methionine</name>
        <dbReference type="ChEBI" id="CHEBI:59789"/>
    </ligand>
</feature>
<feature type="binding site" evidence="1">
    <location>
        <position position="157"/>
    </location>
    <ligand>
        <name>GTP</name>
        <dbReference type="ChEBI" id="CHEBI:37565"/>
    </ligand>
</feature>
<feature type="binding site" evidence="1">
    <location>
        <position position="191"/>
    </location>
    <ligand>
        <name>S-adenosyl-L-methionine</name>
        <dbReference type="ChEBI" id="CHEBI:59789"/>
    </ligand>
</feature>
<feature type="binding site" evidence="1">
    <location>
        <position position="254"/>
    </location>
    <ligand>
        <name>[4Fe-4S] cluster</name>
        <dbReference type="ChEBI" id="CHEBI:49883"/>
        <label>2</label>
        <note>4Fe-4S-substrate</note>
    </ligand>
</feature>
<feature type="binding site" evidence="1">
    <location>
        <position position="257"/>
    </location>
    <ligand>
        <name>[4Fe-4S] cluster</name>
        <dbReference type="ChEBI" id="CHEBI:49883"/>
        <label>2</label>
        <note>4Fe-4S-substrate</note>
    </ligand>
</feature>
<feature type="binding site" evidence="1">
    <location>
        <begin position="259"/>
        <end position="261"/>
    </location>
    <ligand>
        <name>GTP</name>
        <dbReference type="ChEBI" id="CHEBI:37565"/>
    </ligand>
</feature>
<feature type="binding site" evidence="1">
    <location>
        <position position="271"/>
    </location>
    <ligand>
        <name>[4Fe-4S] cluster</name>
        <dbReference type="ChEBI" id="CHEBI:49883"/>
        <label>2</label>
        <note>4Fe-4S-substrate</note>
    </ligand>
</feature>
<name>MOAA_STRM5</name>
<comment type="function">
    <text evidence="1">Catalyzes the cyclization of GTP to (8S)-3',8-cyclo-7,8-dihydroguanosine 5'-triphosphate.</text>
</comment>
<comment type="catalytic activity">
    <reaction evidence="1">
        <text>GTP + AH2 + S-adenosyl-L-methionine = (8S)-3',8-cyclo-7,8-dihydroguanosine 5'-triphosphate + 5'-deoxyadenosine + L-methionine + A + H(+)</text>
        <dbReference type="Rhea" id="RHEA:49576"/>
        <dbReference type="ChEBI" id="CHEBI:13193"/>
        <dbReference type="ChEBI" id="CHEBI:15378"/>
        <dbReference type="ChEBI" id="CHEBI:17319"/>
        <dbReference type="ChEBI" id="CHEBI:17499"/>
        <dbReference type="ChEBI" id="CHEBI:37565"/>
        <dbReference type="ChEBI" id="CHEBI:57844"/>
        <dbReference type="ChEBI" id="CHEBI:59789"/>
        <dbReference type="ChEBI" id="CHEBI:131766"/>
        <dbReference type="EC" id="4.1.99.22"/>
    </reaction>
</comment>
<comment type="cofactor">
    <cofactor evidence="1">
        <name>[4Fe-4S] cluster</name>
        <dbReference type="ChEBI" id="CHEBI:49883"/>
    </cofactor>
    <text evidence="1">Binds 2 [4Fe-4S] clusters. Binds 1 [4Fe-4S] cluster coordinated with 3 cysteines and an exchangeable S-adenosyl-L-methionine and 1 [4Fe-4S] cluster coordinated with 3 cysteines and the GTP-derived substrate.</text>
</comment>
<comment type="pathway">
    <text evidence="1">Cofactor biosynthesis; molybdopterin biosynthesis.</text>
</comment>
<comment type="subunit">
    <text evidence="1">Monomer and homodimer.</text>
</comment>
<comment type="similarity">
    <text evidence="1">Belongs to the radical SAM superfamily. MoaA family.</text>
</comment>
<organism>
    <name type="scientific">Stenotrophomonas maltophilia (strain R551-3)</name>
    <dbReference type="NCBI Taxonomy" id="391008"/>
    <lineage>
        <taxon>Bacteria</taxon>
        <taxon>Pseudomonadati</taxon>
        <taxon>Pseudomonadota</taxon>
        <taxon>Gammaproteobacteria</taxon>
        <taxon>Lysobacterales</taxon>
        <taxon>Lysobacteraceae</taxon>
        <taxon>Stenotrophomonas</taxon>
        <taxon>Stenotrophomonas maltophilia group</taxon>
    </lineage>
</organism>
<keyword id="KW-0004">4Fe-4S</keyword>
<keyword id="KW-0342">GTP-binding</keyword>
<keyword id="KW-0408">Iron</keyword>
<keyword id="KW-0411">Iron-sulfur</keyword>
<keyword id="KW-0456">Lyase</keyword>
<keyword id="KW-0479">Metal-binding</keyword>
<keyword id="KW-0501">Molybdenum cofactor biosynthesis</keyword>
<keyword id="KW-0547">Nucleotide-binding</keyword>
<keyword id="KW-0949">S-adenosyl-L-methionine</keyword>
<accession>B4SL67</accession>
<evidence type="ECO:0000255" key="1">
    <source>
        <dbReference type="HAMAP-Rule" id="MF_01225"/>
    </source>
</evidence>
<evidence type="ECO:0000255" key="2">
    <source>
        <dbReference type="PROSITE-ProRule" id="PRU01266"/>
    </source>
</evidence>
<protein>
    <recommendedName>
        <fullName evidence="1">GTP 3',8-cyclase</fullName>
        <ecNumber evidence="1">4.1.99.22</ecNumber>
    </recommendedName>
    <alternativeName>
        <fullName evidence="1">Molybdenum cofactor biosynthesis protein A</fullName>
    </alternativeName>
</protein>